<evidence type="ECO:0000250" key="1">
    <source>
        <dbReference type="UniProtKB" id="Q64FW2"/>
    </source>
</evidence>
<evidence type="ECO:0000250" key="2">
    <source>
        <dbReference type="UniProtKB" id="Q8S4R4"/>
    </source>
</evidence>
<evidence type="ECO:0000255" key="3"/>
<evidence type="ECO:0000269" key="4">
    <source>
    </source>
</evidence>
<evidence type="ECO:0000269" key="5">
    <source>
    </source>
</evidence>
<evidence type="ECO:0000303" key="6">
    <source>
    </source>
</evidence>
<evidence type="ECO:0000305" key="7"/>
<organism>
    <name type="scientific">Homo sapiens</name>
    <name type="common">Human</name>
    <dbReference type="NCBI Taxonomy" id="9606"/>
    <lineage>
        <taxon>Eukaryota</taxon>
        <taxon>Metazoa</taxon>
        <taxon>Chordata</taxon>
        <taxon>Craniata</taxon>
        <taxon>Vertebrata</taxon>
        <taxon>Euteleostomi</taxon>
        <taxon>Mammalia</taxon>
        <taxon>Eutheria</taxon>
        <taxon>Euarchontoglires</taxon>
        <taxon>Primates</taxon>
        <taxon>Haplorrhini</taxon>
        <taxon>Catarrhini</taxon>
        <taxon>Hominidae</taxon>
        <taxon>Homo</taxon>
    </lineage>
</organism>
<gene>
    <name type="primary">RETSAT</name>
    <name type="synonym">PPSIG</name>
    <name type="ORF">UNQ439/PRO872</name>
</gene>
<sequence>MWLPLVLLLAVLLLAVLCKVYLGLFSGSSPNPFSEDVKRPPAPLVTDKEARKKVLKQAFSANQVPEKLDVVVIGSGFGGLAAAAILAKAGKRVLVLEQHTKAGGCCHTFGKNGLEFDTGIHYIGRMEEGSIGRFILDQITEGQLDWAPLSSPFDIMVLEGPNGRKEYPMYSGEKAYIQGLKEKFPQEEAIIDKYIKLVKVVSSGAPHAILLKFLPLPVVQLLDRCGLLTRFSPFLQASTQSLAEVLQQLGASSELQAVLSYIFPTYGVTPNHSAFSMHALLVNHYMKGGFYPRGGSSEIAFHTIPVIQRAGGAVLTKATVQSVLLDSAGKACGVSVKKGHELVNIYCPIVVSNAGLFNTYEHLLPGNARCLPGVKQQLGTVRPGLGMTSVFICLRGTKEDLHLPSTNYYVYYDTDMDQAMERYVSMPREEAAEHIPLLFFAFPSAKDPTWEDRFPGRSTMIMLIPTAYEWFEEWQAELKGKRGSDYETFKNSFVEASMSVVLKLFPQLEGKVESVTAGSPLTNQFYLAAPRGACYGADHDLGRLHPCVMASLRAQSPIPNLYLTGQDIFTCGLVGALQGALLCSSAILKRNLYSDLKNLDSRIRAQKKKN</sequence>
<protein>
    <recommendedName>
        <fullName>All-trans-retinol 13,14-reductase</fullName>
        <ecNumber evidence="1">1.3.99.23</ecNumber>
    </recommendedName>
    <alternativeName>
        <fullName>All-trans-13,14-dihydroretinol saturase</fullName>
        <shortName>RetSat</shortName>
    </alternativeName>
    <alternativeName>
        <fullName>PPAR-alpha-regulated and starvation-induced gene protein</fullName>
    </alternativeName>
</protein>
<name>RETST_HUMAN</name>
<keyword id="KW-0025">Alternative splicing</keyword>
<keyword id="KW-0256">Endoplasmic reticulum</keyword>
<keyword id="KW-0274">FAD</keyword>
<keyword id="KW-0285">Flavoprotein</keyword>
<keyword id="KW-0443">Lipid metabolism</keyword>
<keyword id="KW-0472">Membrane</keyword>
<keyword id="KW-0520">NAD</keyword>
<keyword id="KW-0521">NADP</keyword>
<keyword id="KW-0560">Oxidoreductase</keyword>
<keyword id="KW-1267">Proteomics identification</keyword>
<keyword id="KW-1185">Reference proteome</keyword>
<keyword id="KW-0732">Signal</keyword>
<reference key="1">
    <citation type="journal article" date="2003" name="Genome Res.">
        <title>The secreted protein discovery initiative (SPDI), a large-scale effort to identify novel human secreted and transmembrane proteins: a bioinformatics assessment.</title>
        <authorList>
            <person name="Clark H.F."/>
            <person name="Gurney A.L."/>
            <person name="Abaya E."/>
            <person name="Baker K."/>
            <person name="Baldwin D.T."/>
            <person name="Brush J."/>
            <person name="Chen J."/>
            <person name="Chow B."/>
            <person name="Chui C."/>
            <person name="Crowley C."/>
            <person name="Currell B."/>
            <person name="Deuel B."/>
            <person name="Dowd P."/>
            <person name="Eaton D."/>
            <person name="Foster J.S."/>
            <person name="Grimaldi C."/>
            <person name="Gu Q."/>
            <person name="Hass P.E."/>
            <person name="Heldens S."/>
            <person name="Huang A."/>
            <person name="Kim H.S."/>
            <person name="Klimowski L."/>
            <person name="Jin Y."/>
            <person name="Johnson S."/>
            <person name="Lee J."/>
            <person name="Lewis L."/>
            <person name="Liao D."/>
            <person name="Mark M.R."/>
            <person name="Robbie E."/>
            <person name="Sanchez C."/>
            <person name="Schoenfeld J."/>
            <person name="Seshagiri S."/>
            <person name="Simmons L."/>
            <person name="Singh J."/>
            <person name="Smith V."/>
            <person name="Stinson J."/>
            <person name="Vagts A."/>
            <person name="Vandlen R.L."/>
            <person name="Watanabe C."/>
            <person name="Wieand D."/>
            <person name="Woods K."/>
            <person name="Xie M.-H."/>
            <person name="Yansura D.G."/>
            <person name="Yi S."/>
            <person name="Yu G."/>
            <person name="Yuan J."/>
            <person name="Zhang M."/>
            <person name="Zhang Z."/>
            <person name="Goddard A.D."/>
            <person name="Wood W.I."/>
            <person name="Godowski P.J."/>
            <person name="Gray A.M."/>
        </authorList>
    </citation>
    <scope>NUCLEOTIDE SEQUENCE [LARGE SCALE MRNA] (ISOFORM 1)</scope>
</reference>
<reference key="2">
    <citation type="journal article" date="2005" name="DNA Res.">
        <title>Signal sequence and keyword trap in silico for selection of full-length human cDNAs encoding secretion or membrane proteins from oligo-capped cDNA libraries.</title>
        <authorList>
            <person name="Otsuki T."/>
            <person name="Ota T."/>
            <person name="Nishikawa T."/>
            <person name="Hayashi K."/>
            <person name="Suzuki Y."/>
            <person name="Yamamoto J."/>
            <person name="Wakamatsu A."/>
            <person name="Kimura K."/>
            <person name="Sakamoto K."/>
            <person name="Hatano N."/>
            <person name="Kawai Y."/>
            <person name="Ishii S."/>
            <person name="Saito K."/>
            <person name="Kojima S."/>
            <person name="Sugiyama T."/>
            <person name="Ono T."/>
            <person name="Okano K."/>
            <person name="Yoshikawa Y."/>
            <person name="Aotsuka S."/>
            <person name="Sasaki N."/>
            <person name="Hattori A."/>
            <person name="Okumura K."/>
            <person name="Nagai K."/>
            <person name="Sugano S."/>
            <person name="Isogai T."/>
        </authorList>
    </citation>
    <scope>NUCLEOTIDE SEQUENCE [LARGE SCALE MRNA] (ISOFORM 1)</scope>
    <source>
        <tissue>Thyroid</tissue>
    </source>
</reference>
<reference key="3">
    <citation type="journal article" date="2005" name="Nature">
        <title>Generation and annotation of the DNA sequences of human chromosomes 2 and 4.</title>
        <authorList>
            <person name="Hillier L.W."/>
            <person name="Graves T.A."/>
            <person name="Fulton R.S."/>
            <person name="Fulton L.A."/>
            <person name="Pepin K.H."/>
            <person name="Minx P."/>
            <person name="Wagner-McPherson C."/>
            <person name="Layman D."/>
            <person name="Wylie K."/>
            <person name="Sekhon M."/>
            <person name="Becker M.C."/>
            <person name="Fewell G.A."/>
            <person name="Delehaunty K.D."/>
            <person name="Miner T.L."/>
            <person name="Nash W.E."/>
            <person name="Kremitzki C."/>
            <person name="Oddy L."/>
            <person name="Du H."/>
            <person name="Sun H."/>
            <person name="Bradshaw-Cordum H."/>
            <person name="Ali J."/>
            <person name="Carter J."/>
            <person name="Cordes M."/>
            <person name="Harris A."/>
            <person name="Isak A."/>
            <person name="van Brunt A."/>
            <person name="Nguyen C."/>
            <person name="Du F."/>
            <person name="Courtney L."/>
            <person name="Kalicki J."/>
            <person name="Ozersky P."/>
            <person name="Abbott S."/>
            <person name="Armstrong J."/>
            <person name="Belter E.A."/>
            <person name="Caruso L."/>
            <person name="Cedroni M."/>
            <person name="Cotton M."/>
            <person name="Davidson T."/>
            <person name="Desai A."/>
            <person name="Elliott G."/>
            <person name="Erb T."/>
            <person name="Fronick C."/>
            <person name="Gaige T."/>
            <person name="Haakenson W."/>
            <person name="Haglund K."/>
            <person name="Holmes A."/>
            <person name="Harkins R."/>
            <person name="Kim K."/>
            <person name="Kruchowski S.S."/>
            <person name="Strong C.M."/>
            <person name="Grewal N."/>
            <person name="Goyea E."/>
            <person name="Hou S."/>
            <person name="Levy A."/>
            <person name="Martinka S."/>
            <person name="Mead K."/>
            <person name="McLellan M.D."/>
            <person name="Meyer R."/>
            <person name="Randall-Maher J."/>
            <person name="Tomlinson C."/>
            <person name="Dauphin-Kohlberg S."/>
            <person name="Kozlowicz-Reilly A."/>
            <person name="Shah N."/>
            <person name="Swearengen-Shahid S."/>
            <person name="Snider J."/>
            <person name="Strong J.T."/>
            <person name="Thompson J."/>
            <person name="Yoakum M."/>
            <person name="Leonard S."/>
            <person name="Pearman C."/>
            <person name="Trani L."/>
            <person name="Radionenko M."/>
            <person name="Waligorski J.E."/>
            <person name="Wang C."/>
            <person name="Rock S.M."/>
            <person name="Tin-Wollam A.-M."/>
            <person name="Maupin R."/>
            <person name="Latreille P."/>
            <person name="Wendl M.C."/>
            <person name="Yang S.-P."/>
            <person name="Pohl C."/>
            <person name="Wallis J.W."/>
            <person name="Spieth J."/>
            <person name="Bieri T.A."/>
            <person name="Berkowicz N."/>
            <person name="Nelson J.O."/>
            <person name="Osborne J."/>
            <person name="Ding L."/>
            <person name="Meyer R."/>
            <person name="Sabo A."/>
            <person name="Shotland Y."/>
            <person name="Sinha P."/>
            <person name="Wohldmann P.E."/>
            <person name="Cook L.L."/>
            <person name="Hickenbotham M.T."/>
            <person name="Eldred J."/>
            <person name="Williams D."/>
            <person name="Jones T.A."/>
            <person name="She X."/>
            <person name="Ciccarelli F.D."/>
            <person name="Izaurralde E."/>
            <person name="Taylor J."/>
            <person name="Schmutz J."/>
            <person name="Myers R.M."/>
            <person name="Cox D.R."/>
            <person name="Huang X."/>
            <person name="McPherson J.D."/>
            <person name="Mardis E.R."/>
            <person name="Clifton S.W."/>
            <person name="Warren W.C."/>
            <person name="Chinwalla A.T."/>
            <person name="Eddy S.R."/>
            <person name="Marra M.A."/>
            <person name="Ovcharenko I."/>
            <person name="Furey T.S."/>
            <person name="Miller W."/>
            <person name="Eichler E.E."/>
            <person name="Bork P."/>
            <person name="Suyama M."/>
            <person name="Torrents D."/>
            <person name="Waterston R.H."/>
            <person name="Wilson R.K."/>
        </authorList>
    </citation>
    <scope>NUCLEOTIDE SEQUENCE [LARGE SCALE GENOMIC DNA]</scope>
</reference>
<reference key="4">
    <citation type="journal article" date="2004" name="Genome Res.">
        <title>The status, quality, and expansion of the NIH full-length cDNA project: the Mammalian Gene Collection (MGC).</title>
        <authorList>
            <consortium name="The MGC Project Team"/>
        </authorList>
    </citation>
    <scope>NUCLEOTIDE SEQUENCE [LARGE SCALE MRNA] (ISOFORM 1)</scope>
    <scope>NUCLEOTIDE SEQUENCE [LARGE SCALE MRNA] OF 161-610 (ISOFORM 2)</scope>
    <source>
        <tissue>Colon</tissue>
        <tissue>Testis</tissue>
    </source>
</reference>
<reference key="5">
    <citation type="journal article" date="2004" name="Nat. Genet.">
        <title>Complete sequencing and characterization of 21,243 full-length human cDNAs.</title>
        <authorList>
            <person name="Ota T."/>
            <person name="Suzuki Y."/>
            <person name="Nishikawa T."/>
            <person name="Otsuki T."/>
            <person name="Sugiyama T."/>
            <person name="Irie R."/>
            <person name="Wakamatsu A."/>
            <person name="Hayashi K."/>
            <person name="Sato H."/>
            <person name="Nagai K."/>
            <person name="Kimura K."/>
            <person name="Makita H."/>
            <person name="Sekine M."/>
            <person name="Obayashi M."/>
            <person name="Nishi T."/>
            <person name="Shibahara T."/>
            <person name="Tanaka T."/>
            <person name="Ishii S."/>
            <person name="Yamamoto J."/>
            <person name="Saito K."/>
            <person name="Kawai Y."/>
            <person name="Isono Y."/>
            <person name="Nakamura Y."/>
            <person name="Nagahari K."/>
            <person name="Murakami K."/>
            <person name="Yasuda T."/>
            <person name="Iwayanagi T."/>
            <person name="Wagatsuma M."/>
            <person name="Shiratori A."/>
            <person name="Sudo H."/>
            <person name="Hosoiri T."/>
            <person name="Kaku Y."/>
            <person name="Kodaira H."/>
            <person name="Kondo H."/>
            <person name="Sugawara M."/>
            <person name="Takahashi M."/>
            <person name="Kanda K."/>
            <person name="Yokoi T."/>
            <person name="Furuya T."/>
            <person name="Kikkawa E."/>
            <person name="Omura Y."/>
            <person name="Abe K."/>
            <person name="Kamihara K."/>
            <person name="Katsuta N."/>
            <person name="Sato K."/>
            <person name="Tanikawa M."/>
            <person name="Yamazaki M."/>
            <person name="Ninomiya K."/>
            <person name="Ishibashi T."/>
            <person name="Yamashita H."/>
            <person name="Murakawa K."/>
            <person name="Fujimori K."/>
            <person name="Tanai H."/>
            <person name="Kimata M."/>
            <person name="Watanabe M."/>
            <person name="Hiraoka S."/>
            <person name="Chiba Y."/>
            <person name="Ishida S."/>
            <person name="Ono Y."/>
            <person name="Takiguchi S."/>
            <person name="Watanabe S."/>
            <person name="Yosida M."/>
            <person name="Hotuta T."/>
            <person name="Kusano J."/>
            <person name="Kanehori K."/>
            <person name="Takahashi-Fujii A."/>
            <person name="Hara H."/>
            <person name="Tanase T.-O."/>
            <person name="Nomura Y."/>
            <person name="Togiya S."/>
            <person name="Komai F."/>
            <person name="Hara R."/>
            <person name="Takeuchi K."/>
            <person name="Arita M."/>
            <person name="Imose N."/>
            <person name="Musashino K."/>
            <person name="Yuuki H."/>
            <person name="Oshima A."/>
            <person name="Sasaki N."/>
            <person name="Aotsuka S."/>
            <person name="Yoshikawa Y."/>
            <person name="Matsunawa H."/>
            <person name="Ichihara T."/>
            <person name="Shiohata N."/>
            <person name="Sano S."/>
            <person name="Moriya S."/>
            <person name="Momiyama H."/>
            <person name="Satoh N."/>
            <person name="Takami S."/>
            <person name="Terashima Y."/>
            <person name="Suzuki O."/>
            <person name="Nakagawa S."/>
            <person name="Senoh A."/>
            <person name="Mizoguchi H."/>
            <person name="Goto Y."/>
            <person name="Shimizu F."/>
            <person name="Wakebe H."/>
            <person name="Hishigaki H."/>
            <person name="Watanabe T."/>
            <person name="Sugiyama A."/>
            <person name="Takemoto M."/>
            <person name="Kawakami B."/>
            <person name="Yamazaki M."/>
            <person name="Watanabe K."/>
            <person name="Kumagai A."/>
            <person name="Itakura S."/>
            <person name="Fukuzumi Y."/>
            <person name="Fujimori Y."/>
            <person name="Komiyama M."/>
            <person name="Tashiro H."/>
            <person name="Tanigami A."/>
            <person name="Fujiwara T."/>
            <person name="Ono T."/>
            <person name="Yamada K."/>
            <person name="Fujii Y."/>
            <person name="Ozaki K."/>
            <person name="Hirao M."/>
            <person name="Ohmori Y."/>
            <person name="Kawabata A."/>
            <person name="Hikiji T."/>
            <person name="Kobatake N."/>
            <person name="Inagaki H."/>
            <person name="Ikema Y."/>
            <person name="Okamoto S."/>
            <person name="Okitani R."/>
            <person name="Kawakami T."/>
            <person name="Noguchi S."/>
            <person name="Itoh T."/>
            <person name="Shigeta K."/>
            <person name="Senba T."/>
            <person name="Matsumura K."/>
            <person name="Nakajima Y."/>
            <person name="Mizuno T."/>
            <person name="Morinaga M."/>
            <person name="Sasaki M."/>
            <person name="Togashi T."/>
            <person name="Oyama M."/>
            <person name="Hata H."/>
            <person name="Watanabe M."/>
            <person name="Komatsu T."/>
            <person name="Mizushima-Sugano J."/>
            <person name="Satoh T."/>
            <person name="Shirai Y."/>
            <person name="Takahashi Y."/>
            <person name="Nakagawa K."/>
            <person name="Okumura K."/>
            <person name="Nagase T."/>
            <person name="Nomura N."/>
            <person name="Kikuchi H."/>
            <person name="Masuho Y."/>
            <person name="Yamashita R."/>
            <person name="Nakai K."/>
            <person name="Yada T."/>
            <person name="Nakamura Y."/>
            <person name="Ohara O."/>
            <person name="Isogai T."/>
            <person name="Sugano S."/>
        </authorList>
    </citation>
    <scope>NUCLEOTIDE SEQUENCE [LARGE SCALE MRNA] OF 195-610 (ISOFORM 1)</scope>
    <source>
        <tissue>Hepatoma</tissue>
    </source>
</reference>
<reference key="6">
    <citation type="journal article" date="2009" name="Proc. Natl. Acad. Sci. U.S.A.">
        <title>Retinol saturase promotes adipogenesis and is downregulated in obesity.</title>
        <authorList>
            <person name="Schupp M."/>
            <person name="Lefterova M.I."/>
            <person name="Janke J."/>
            <person name="Leitner K."/>
            <person name="Cristancho A.G."/>
            <person name="Mullican S.E."/>
            <person name="Qatanani M."/>
            <person name="Szwergold N."/>
            <person name="Steger D.J."/>
            <person name="Curtin J.C."/>
            <person name="Kim R.J."/>
            <person name="Suh M.J."/>
            <person name="Suh M."/>
            <person name="Albert M.R."/>
            <person name="Engeli S."/>
            <person name="Gudas L.J."/>
            <person name="Lazar M.A."/>
        </authorList>
    </citation>
    <scope>TISSUE SPECIFICITY</scope>
</reference>
<reference key="7">
    <citation type="journal article" date="2011" name="BMC Syst. Biol.">
        <title>Initial characterization of the human central proteome.</title>
        <authorList>
            <person name="Burkard T.R."/>
            <person name="Planyavsky M."/>
            <person name="Kaupe I."/>
            <person name="Breitwieser F.P."/>
            <person name="Buerckstuemmer T."/>
            <person name="Bennett K.L."/>
            <person name="Superti-Furga G."/>
            <person name="Colinge J."/>
        </authorList>
    </citation>
    <scope>IDENTIFICATION BY MASS SPECTROMETRY [LARGE SCALE ANALYSIS]</scope>
</reference>
<reference key="8">
    <citation type="journal article" date="2017" name="Nat. Commun.">
        <title>Retinol saturase coordinates liver metabolism by regulating ChREBP activity.</title>
        <authorList>
            <person name="Heidenreich S."/>
            <person name="Witte N."/>
            <person name="Weber P."/>
            <person name="Goehring I."/>
            <person name="Tolkachov A."/>
            <person name="von Loeffelholz C."/>
            <person name="Doecke S."/>
            <person name="Bauer M."/>
            <person name="Stockmann M."/>
            <person name="Pfeiffer A.F.H."/>
            <person name="Birkenfeld A.L."/>
            <person name="Pietzke M."/>
            <person name="Kempa S."/>
            <person name="Muenzner M."/>
            <person name="Schupp M."/>
        </authorList>
    </citation>
    <scope>TISSUE SPECIFICITY</scope>
</reference>
<accession>Q6NUM9</accession>
<accession>A6NIK3</accession>
<accession>Q53R95</accession>
<accession>Q53SA9</accession>
<accession>Q6UX05</accession>
<accession>Q8N2H5</accession>
<accession>Q96FA4</accession>
<accession>Q9NXE5</accession>
<proteinExistence type="evidence at protein level"/>
<comment type="function">
    <text evidence="1">Catalyzes the saturation of all-trans-retinol to all-trans-13,14-dihydroretinol. Does not exhibit any activity toward all-trans-retinoic acid, nor 9-cis, 11-cis or 13-cis-retinol isomers. May play a role in the metabolism of vitamin A. Independently of retinol conversion, may regulate liver metabolism upstream of MLXIPL/ChREBP. May play a role in adipocyte differentiation.</text>
</comment>
<comment type="catalytic activity">
    <reaction evidence="1">
        <text>all-trans-13,14-dihydroretinol + A = all-trans-retinol + AH2</text>
        <dbReference type="Rhea" id="RHEA:19193"/>
        <dbReference type="ChEBI" id="CHEBI:13193"/>
        <dbReference type="ChEBI" id="CHEBI:17336"/>
        <dbReference type="ChEBI" id="CHEBI:17499"/>
        <dbReference type="ChEBI" id="CHEBI:52075"/>
        <dbReference type="EC" id="1.3.99.23"/>
    </reaction>
</comment>
<comment type="cofactor">
    <cofactor evidence="2">
        <name>NAD(+)</name>
        <dbReference type="ChEBI" id="CHEBI:57540"/>
    </cofactor>
    <cofactor evidence="2">
        <name>NADP(+)</name>
        <dbReference type="ChEBI" id="CHEBI:58349"/>
    </cofactor>
    <cofactor evidence="2">
        <name>FAD</name>
        <dbReference type="ChEBI" id="CHEBI:57692"/>
    </cofactor>
</comment>
<comment type="subcellular location">
    <subcellularLocation>
        <location evidence="1">Endoplasmic reticulum membrane</location>
        <topology evidence="1">Peripheral membrane protein</topology>
    </subcellularLocation>
</comment>
<comment type="alternative products">
    <event type="alternative splicing"/>
    <isoform>
        <id>Q6NUM9-1</id>
        <name>1</name>
        <sequence type="displayed"/>
    </isoform>
    <isoform>
        <id>Q6NUM9-2</id>
        <name>2</name>
        <sequence type="described" ref="VSP_017410 VSP_017411"/>
    </isoform>
</comment>
<comment type="tissue specificity">
    <text evidence="4 5">Expressed in liver; expression positively correlates with obesity and liver steatosis (PubMed:28855500). Expressed in adipose tissue; expression tends to be decreased in obese versus lean individuals (PubMed:19139408).</text>
</comment>
<comment type="similarity">
    <text evidence="7">Belongs to the carotenoid/retinoid oxidoreductase family. CrtISO subfamily.</text>
</comment>
<comment type="sequence caution" evidence="7">
    <conflict type="erroneous initiation">
        <sequence resource="EMBL-CDS" id="AAH11418"/>
    </conflict>
    <text>Truncated N-terminus.</text>
</comment>
<comment type="sequence caution" evidence="7">
    <conflict type="erroneous initiation">
        <sequence resource="EMBL-CDS" id="BAA91069"/>
    </conflict>
    <text>Truncated N-terminus.</text>
</comment>
<feature type="signal peptide" evidence="3">
    <location>
        <begin position="1"/>
        <end position="18"/>
    </location>
</feature>
<feature type="chain" id="PRO_0000225665" description="All-trans-retinol 13,14-reductase">
    <location>
        <begin position="19"/>
        <end position="610"/>
    </location>
</feature>
<feature type="splice variant" id="VSP_017410" description="In isoform 2." evidence="6">
    <original>RSTMIMLIPTAYEWFEEWQAELKGK</original>
    <variation>GECDCRIPTHQPVLSGCSPRCLLRG</variation>
    <location>
        <begin position="457"/>
        <end position="481"/>
    </location>
</feature>
<feature type="splice variant" id="VSP_017411" description="In isoform 2." evidence="6">
    <location>
        <begin position="482"/>
        <end position="610"/>
    </location>
</feature>
<feature type="sequence variant" id="VAR_025473" description="In dbSNP:rs4832169.">
    <original>A</original>
    <variation>V</variation>
    <location>
        <position position="533"/>
    </location>
</feature>
<feature type="sequence variant" id="VAR_059243" description="In dbSNP:rs4832168.">
    <original>G</original>
    <variation>R</variation>
    <location>
        <position position="536"/>
    </location>
</feature>
<feature type="sequence variant" id="VAR_059244" description="In dbSNP:rs13384912.">
    <original>P</original>
    <variation>T</variation>
    <location>
        <position position="559"/>
    </location>
</feature>
<feature type="sequence conflict" description="In Ref. 4; AAH68517." evidence="7" ref="4">
    <original>T</original>
    <variation>S</variation>
    <location>
        <position position="140"/>
    </location>
</feature>
<feature type="sequence conflict" description="In Ref. 4; AAH11418." evidence="7" ref="4">
    <original>E</original>
    <variation>Q</variation>
    <location>
        <position position="298"/>
    </location>
</feature>
<feature type="sequence conflict" description="In Ref. 2; BAC11505." evidence="7" ref="2">
    <original>N</original>
    <variation>S</variation>
    <location>
        <position position="353"/>
    </location>
</feature>
<dbReference type="EC" id="1.3.99.23" evidence="1"/>
<dbReference type="EMBL" id="AY358568">
    <property type="protein sequence ID" value="AAQ88931.1"/>
    <property type="molecule type" value="mRNA"/>
</dbReference>
<dbReference type="EMBL" id="AK075261">
    <property type="protein sequence ID" value="BAC11505.1"/>
    <property type="molecule type" value="mRNA"/>
</dbReference>
<dbReference type="EMBL" id="AC062037">
    <property type="protein sequence ID" value="AAY24126.1"/>
    <property type="molecule type" value="Genomic_DNA"/>
</dbReference>
<dbReference type="EMBL" id="AC093162">
    <property type="protein sequence ID" value="AAY24096.1"/>
    <property type="molecule type" value="Genomic_DNA"/>
</dbReference>
<dbReference type="EMBL" id="BC068517">
    <property type="protein sequence ID" value="AAH68517.1"/>
    <property type="molecule type" value="mRNA"/>
</dbReference>
<dbReference type="EMBL" id="BC011418">
    <property type="protein sequence ID" value="AAH11418.1"/>
    <property type="status" value="ALT_INIT"/>
    <property type="molecule type" value="mRNA"/>
</dbReference>
<dbReference type="EMBL" id="AK000303">
    <property type="protein sequence ID" value="BAA91069.1"/>
    <property type="status" value="ALT_INIT"/>
    <property type="molecule type" value="mRNA"/>
</dbReference>
<dbReference type="CCDS" id="CCDS1972.1">
    <molecule id="Q6NUM9-1"/>
</dbReference>
<dbReference type="RefSeq" id="NP_060220.3">
    <molecule id="Q6NUM9-1"/>
    <property type="nucleotide sequence ID" value="NM_017750.3"/>
</dbReference>
<dbReference type="RefSeq" id="XP_047300784.1">
    <molecule id="Q6NUM9-2"/>
    <property type="nucleotide sequence ID" value="XM_047444828.1"/>
</dbReference>
<dbReference type="RefSeq" id="XP_054188878.1">
    <molecule id="Q6NUM9-2"/>
    <property type="nucleotide sequence ID" value="XM_054332903.1"/>
</dbReference>
<dbReference type="RefSeq" id="XP_054198639.1">
    <molecule id="Q6NUM9-2"/>
    <property type="nucleotide sequence ID" value="XM_054342664.1"/>
</dbReference>
<dbReference type="SMR" id="Q6NUM9"/>
<dbReference type="BioGRID" id="120232">
    <property type="interactions" value="147"/>
</dbReference>
<dbReference type="FunCoup" id="Q6NUM9">
    <property type="interactions" value="580"/>
</dbReference>
<dbReference type="IntAct" id="Q6NUM9">
    <property type="interactions" value="75"/>
</dbReference>
<dbReference type="MINT" id="Q6NUM9"/>
<dbReference type="STRING" id="9606.ENSP00000295802"/>
<dbReference type="DrugBank" id="DB00162">
    <property type="generic name" value="Vitamin A"/>
</dbReference>
<dbReference type="iPTMnet" id="Q6NUM9"/>
<dbReference type="PhosphoSitePlus" id="Q6NUM9"/>
<dbReference type="SwissPalm" id="Q6NUM9"/>
<dbReference type="BioMuta" id="RETSAT"/>
<dbReference type="DMDM" id="90108452"/>
<dbReference type="jPOST" id="Q6NUM9"/>
<dbReference type="MassIVE" id="Q6NUM9"/>
<dbReference type="PaxDb" id="9606-ENSP00000295802"/>
<dbReference type="PeptideAtlas" id="Q6NUM9"/>
<dbReference type="ProteomicsDB" id="66690">
    <molecule id="Q6NUM9-1"/>
</dbReference>
<dbReference type="ProteomicsDB" id="66691">
    <molecule id="Q6NUM9-2"/>
</dbReference>
<dbReference type="Pumba" id="Q6NUM9"/>
<dbReference type="Antibodypedia" id="2224">
    <property type="antibodies" value="20 antibodies from 10 providers"/>
</dbReference>
<dbReference type="DNASU" id="54884"/>
<dbReference type="Ensembl" id="ENST00000295802.9">
    <molecule id="Q6NUM9-1"/>
    <property type="protein sequence ID" value="ENSP00000295802.4"/>
    <property type="gene ID" value="ENSG00000042445.14"/>
</dbReference>
<dbReference type="Ensembl" id="ENST00000709863.1">
    <molecule id="Q6NUM9-1"/>
    <property type="protein sequence ID" value="ENSP00000517901.1"/>
    <property type="gene ID" value="ENSG00000292155.1"/>
</dbReference>
<dbReference type="GeneID" id="54884"/>
<dbReference type="KEGG" id="hsa:54884"/>
<dbReference type="MANE-Select" id="ENST00000295802.9">
    <property type="protein sequence ID" value="ENSP00000295802.4"/>
    <property type="RefSeq nucleotide sequence ID" value="NM_017750.4"/>
    <property type="RefSeq protein sequence ID" value="NP_060220.3"/>
</dbReference>
<dbReference type="UCSC" id="uc002spd.4">
    <molecule id="Q6NUM9-1"/>
    <property type="organism name" value="human"/>
</dbReference>
<dbReference type="AGR" id="HGNC:25991"/>
<dbReference type="CTD" id="54884"/>
<dbReference type="DisGeNET" id="54884"/>
<dbReference type="GeneCards" id="RETSAT"/>
<dbReference type="HGNC" id="HGNC:25991">
    <property type="gene designation" value="RETSAT"/>
</dbReference>
<dbReference type="HPA" id="ENSG00000042445">
    <property type="expression patterns" value="Tissue enhanced (adipose)"/>
</dbReference>
<dbReference type="MIM" id="617597">
    <property type="type" value="gene"/>
</dbReference>
<dbReference type="neXtProt" id="NX_Q6NUM9"/>
<dbReference type="OpenTargets" id="ENSG00000042445"/>
<dbReference type="PharmGKB" id="PA145007867"/>
<dbReference type="VEuPathDB" id="HostDB:ENSG00000042445"/>
<dbReference type="eggNOG" id="KOG4254">
    <property type="taxonomic scope" value="Eukaryota"/>
</dbReference>
<dbReference type="GeneTree" id="ENSGT00390000017613"/>
<dbReference type="HOGENOM" id="CLU_019722_1_0_1"/>
<dbReference type="InParanoid" id="Q6NUM9"/>
<dbReference type="OMA" id="THTSLVW"/>
<dbReference type="OrthoDB" id="38045at2759"/>
<dbReference type="PAN-GO" id="Q6NUM9">
    <property type="GO annotations" value="3 GO annotations based on evolutionary models"/>
</dbReference>
<dbReference type="PhylomeDB" id="Q6NUM9"/>
<dbReference type="TreeFam" id="TF328375"/>
<dbReference type="PathwayCommons" id="Q6NUM9"/>
<dbReference type="Reactome" id="R-HSA-975634">
    <property type="pathway name" value="Retinoid metabolism and transport"/>
</dbReference>
<dbReference type="SignaLink" id="Q6NUM9"/>
<dbReference type="BioGRID-ORCS" id="54884">
    <property type="hits" value="17 hits in 1166 CRISPR screens"/>
</dbReference>
<dbReference type="ChiTaRS" id="RETSAT">
    <property type="organism name" value="human"/>
</dbReference>
<dbReference type="GeneWiki" id="RETSAT"/>
<dbReference type="GenomeRNAi" id="54884"/>
<dbReference type="Pharos" id="Q6NUM9">
    <property type="development level" value="Tdark"/>
</dbReference>
<dbReference type="PRO" id="PR:Q6NUM9"/>
<dbReference type="Proteomes" id="UP000005640">
    <property type="component" value="Chromosome 2"/>
</dbReference>
<dbReference type="RNAct" id="Q6NUM9">
    <property type="molecule type" value="protein"/>
</dbReference>
<dbReference type="Bgee" id="ENSG00000042445">
    <property type="expression patterns" value="Expressed in mucosa of transverse colon and 196 other cell types or tissues"/>
</dbReference>
<dbReference type="ExpressionAtlas" id="Q6NUM9">
    <property type="expression patterns" value="baseline and differential"/>
</dbReference>
<dbReference type="GO" id="GO:0005789">
    <property type="term" value="C:endoplasmic reticulum membrane"/>
    <property type="evidence" value="ECO:0000250"/>
    <property type="project" value="HGNC-UCL"/>
</dbReference>
<dbReference type="GO" id="GO:0016020">
    <property type="term" value="C:membrane"/>
    <property type="evidence" value="ECO:0007005"/>
    <property type="project" value="UniProtKB"/>
</dbReference>
<dbReference type="GO" id="GO:0031965">
    <property type="term" value="C:nuclear membrane"/>
    <property type="evidence" value="ECO:0000250"/>
    <property type="project" value="HGNC-UCL"/>
</dbReference>
<dbReference type="GO" id="GO:0005640">
    <property type="term" value="C:nuclear outer membrane"/>
    <property type="evidence" value="ECO:0000250"/>
    <property type="project" value="HGNC-UCL"/>
</dbReference>
<dbReference type="GO" id="GO:0051786">
    <property type="term" value="F:all-trans-retinol 13,14-reductase activity"/>
    <property type="evidence" value="ECO:0000250"/>
    <property type="project" value="HGNC-UCL"/>
</dbReference>
<dbReference type="GO" id="GO:0042572">
    <property type="term" value="P:retinol metabolic process"/>
    <property type="evidence" value="ECO:0000250"/>
    <property type="project" value="HGNC-UCL"/>
</dbReference>
<dbReference type="FunFam" id="3.50.50.60:FF:000139">
    <property type="entry name" value="All-trans-retinol 13,14-reductase"/>
    <property type="match status" value="1"/>
</dbReference>
<dbReference type="FunFam" id="3.50.50.60:FF:000178">
    <property type="entry name" value="All-trans-retinol 13,14-reductase"/>
    <property type="match status" value="1"/>
</dbReference>
<dbReference type="Gene3D" id="3.50.50.60">
    <property type="entry name" value="FAD/NAD(P)-binding domain"/>
    <property type="match status" value="2"/>
</dbReference>
<dbReference type="InterPro" id="IPR036188">
    <property type="entry name" value="FAD/NAD-bd_sf"/>
</dbReference>
<dbReference type="InterPro" id="IPR052206">
    <property type="entry name" value="Retinol_saturase"/>
</dbReference>
<dbReference type="PANTHER" id="PTHR46091:SF1">
    <property type="entry name" value="ALL-TRANS-RETINOL 13,14-REDUCTASE"/>
    <property type="match status" value="1"/>
</dbReference>
<dbReference type="PANTHER" id="PTHR46091">
    <property type="entry name" value="BLR7054 PROTEIN"/>
    <property type="match status" value="1"/>
</dbReference>
<dbReference type="Pfam" id="PF13450">
    <property type="entry name" value="NAD_binding_8"/>
    <property type="match status" value="1"/>
</dbReference>
<dbReference type="SUPFAM" id="SSF51905">
    <property type="entry name" value="FAD/NAD(P)-binding domain"/>
    <property type="match status" value="1"/>
</dbReference>